<dbReference type="EC" id="7.1.1.-" evidence="2"/>
<dbReference type="EMBL" id="AE006914">
    <property type="protein sequence ID" value="AAL03022.1"/>
    <property type="molecule type" value="Genomic_DNA"/>
</dbReference>
<dbReference type="PIR" id="D97760">
    <property type="entry name" value="D97760"/>
</dbReference>
<dbReference type="RefSeq" id="WP_004995988.1">
    <property type="nucleotide sequence ID" value="NC_003103.1"/>
</dbReference>
<dbReference type="SMR" id="Q92ID6"/>
<dbReference type="KEGG" id="rco:RC0484"/>
<dbReference type="HOGENOM" id="CLU_055737_7_3_5"/>
<dbReference type="Proteomes" id="UP000000816">
    <property type="component" value="Chromosome"/>
</dbReference>
<dbReference type="GO" id="GO:0005886">
    <property type="term" value="C:plasma membrane"/>
    <property type="evidence" value="ECO:0007669"/>
    <property type="project" value="UniProtKB-SubCell"/>
</dbReference>
<dbReference type="GO" id="GO:0045271">
    <property type="term" value="C:respiratory chain complex I"/>
    <property type="evidence" value="ECO:0007669"/>
    <property type="project" value="TreeGrafter"/>
</dbReference>
<dbReference type="GO" id="GO:0051539">
    <property type="term" value="F:4 iron, 4 sulfur cluster binding"/>
    <property type="evidence" value="ECO:0007669"/>
    <property type="project" value="UniProtKB-KW"/>
</dbReference>
<dbReference type="GO" id="GO:0005506">
    <property type="term" value="F:iron ion binding"/>
    <property type="evidence" value="ECO:0007669"/>
    <property type="project" value="UniProtKB-UniRule"/>
</dbReference>
<dbReference type="GO" id="GO:0008137">
    <property type="term" value="F:NADH dehydrogenase (ubiquinone) activity"/>
    <property type="evidence" value="ECO:0007669"/>
    <property type="project" value="InterPro"/>
</dbReference>
<dbReference type="GO" id="GO:0050136">
    <property type="term" value="F:NADH:ubiquinone reductase (non-electrogenic) activity"/>
    <property type="evidence" value="ECO:0007669"/>
    <property type="project" value="UniProtKB-UniRule"/>
</dbReference>
<dbReference type="GO" id="GO:0048038">
    <property type="term" value="F:quinone binding"/>
    <property type="evidence" value="ECO:0007669"/>
    <property type="project" value="UniProtKB-KW"/>
</dbReference>
<dbReference type="GO" id="GO:0009060">
    <property type="term" value="P:aerobic respiration"/>
    <property type="evidence" value="ECO:0007669"/>
    <property type="project" value="TreeGrafter"/>
</dbReference>
<dbReference type="GO" id="GO:0015990">
    <property type="term" value="P:electron transport coupled proton transport"/>
    <property type="evidence" value="ECO:0007669"/>
    <property type="project" value="TreeGrafter"/>
</dbReference>
<dbReference type="FunFam" id="3.40.50.12280:FF:000001">
    <property type="entry name" value="NADH-quinone oxidoreductase subunit B 2"/>
    <property type="match status" value="1"/>
</dbReference>
<dbReference type="Gene3D" id="3.40.50.12280">
    <property type="match status" value="1"/>
</dbReference>
<dbReference type="HAMAP" id="MF_01356">
    <property type="entry name" value="NDH1_NuoB"/>
    <property type="match status" value="1"/>
</dbReference>
<dbReference type="InterPro" id="IPR006137">
    <property type="entry name" value="NADH_UbQ_OxRdtase-like_20kDa"/>
</dbReference>
<dbReference type="InterPro" id="IPR006138">
    <property type="entry name" value="NADH_UQ_OxRdtase_20Kd_su"/>
</dbReference>
<dbReference type="NCBIfam" id="TIGR01957">
    <property type="entry name" value="nuoB_fam"/>
    <property type="match status" value="1"/>
</dbReference>
<dbReference type="NCBIfam" id="NF005012">
    <property type="entry name" value="PRK06411.1"/>
    <property type="match status" value="1"/>
</dbReference>
<dbReference type="PANTHER" id="PTHR11995">
    <property type="entry name" value="NADH DEHYDROGENASE"/>
    <property type="match status" value="1"/>
</dbReference>
<dbReference type="PANTHER" id="PTHR11995:SF14">
    <property type="entry name" value="NADH DEHYDROGENASE [UBIQUINONE] IRON-SULFUR PROTEIN 7, MITOCHONDRIAL"/>
    <property type="match status" value="1"/>
</dbReference>
<dbReference type="Pfam" id="PF01058">
    <property type="entry name" value="Oxidored_q6"/>
    <property type="match status" value="1"/>
</dbReference>
<dbReference type="SUPFAM" id="SSF56770">
    <property type="entry name" value="HydA/Nqo6-like"/>
    <property type="match status" value="1"/>
</dbReference>
<dbReference type="PROSITE" id="PS01150">
    <property type="entry name" value="COMPLEX1_20K"/>
    <property type="match status" value="1"/>
</dbReference>
<evidence type="ECO:0000250" key="1"/>
<evidence type="ECO:0000255" key="2">
    <source>
        <dbReference type="HAMAP-Rule" id="MF_01356"/>
    </source>
</evidence>
<sequence length="174" mass="19616">MKNNFYQEDELLSNELSNRGFLLTKVDDVIGWARANSLWPMTFGLACCAVEMMQAAASRYDMDRFGMLFRPSPRQSDLMIVAGTLTNKMAPALRKVYDQMAEPKWVLSMGSCANGGGYYHFSYSVVRGCDRIVPVDVYVPGCPPTAEALIYGLMQLQKKIKRTTGFKYDARQTH</sequence>
<name>NUOB_RICCN</name>
<comment type="function">
    <text evidence="1">NDH-1 shuttles electrons from NADH, via FMN and iron-sulfur (Fe-S) centers, to quinones in the respiratory chain. Couples the redox reaction to proton translocation (for every two electrons transferred, four hydrogen ions are translocated across the cytoplasmic membrane), and thus conserves the redox energy in a proton gradient (By similarity).</text>
</comment>
<comment type="catalytic activity">
    <reaction evidence="2">
        <text>a quinone + NADH + 5 H(+)(in) = a quinol + NAD(+) + 4 H(+)(out)</text>
        <dbReference type="Rhea" id="RHEA:57888"/>
        <dbReference type="ChEBI" id="CHEBI:15378"/>
        <dbReference type="ChEBI" id="CHEBI:24646"/>
        <dbReference type="ChEBI" id="CHEBI:57540"/>
        <dbReference type="ChEBI" id="CHEBI:57945"/>
        <dbReference type="ChEBI" id="CHEBI:132124"/>
    </reaction>
</comment>
<comment type="cofactor">
    <cofactor evidence="2">
        <name>[4Fe-4S] cluster</name>
        <dbReference type="ChEBI" id="CHEBI:49883"/>
    </cofactor>
    <text evidence="2">Binds 1 [4Fe-4S] cluster.</text>
</comment>
<comment type="subunit">
    <text evidence="2">NDH-1 is composed of 14 different subunits. Subunits NuoB, C, D, E, F, and G constitute the peripheral sector of the complex.</text>
</comment>
<comment type="subcellular location">
    <subcellularLocation>
        <location evidence="2">Cell inner membrane</location>
        <topology evidence="2">Peripheral membrane protein</topology>
        <orientation evidence="2">Cytoplasmic side</orientation>
    </subcellularLocation>
</comment>
<comment type="similarity">
    <text evidence="2">Belongs to the complex I 20 kDa subunit family.</text>
</comment>
<gene>
    <name evidence="2" type="primary">nuoB</name>
    <name type="ordered locus">RC0484</name>
</gene>
<proteinExistence type="inferred from homology"/>
<feature type="chain" id="PRO_0000118778" description="NADH-quinone oxidoreductase subunit B">
    <location>
        <begin position="1"/>
        <end position="174"/>
    </location>
</feature>
<feature type="binding site" evidence="2">
    <location>
        <position position="47"/>
    </location>
    <ligand>
        <name>[4Fe-4S] cluster</name>
        <dbReference type="ChEBI" id="CHEBI:49883"/>
    </ligand>
</feature>
<feature type="binding site" evidence="2">
    <location>
        <position position="48"/>
    </location>
    <ligand>
        <name>[4Fe-4S] cluster</name>
        <dbReference type="ChEBI" id="CHEBI:49883"/>
    </ligand>
</feature>
<feature type="binding site" evidence="2">
    <location>
        <position position="112"/>
    </location>
    <ligand>
        <name>[4Fe-4S] cluster</name>
        <dbReference type="ChEBI" id="CHEBI:49883"/>
    </ligand>
</feature>
<feature type="binding site" evidence="2">
    <location>
        <position position="142"/>
    </location>
    <ligand>
        <name>[4Fe-4S] cluster</name>
        <dbReference type="ChEBI" id="CHEBI:49883"/>
    </ligand>
</feature>
<accession>Q92ID6</accession>
<reference key="1">
    <citation type="journal article" date="2001" name="Science">
        <title>Mechanisms of evolution in Rickettsia conorii and R. prowazekii.</title>
        <authorList>
            <person name="Ogata H."/>
            <person name="Audic S."/>
            <person name="Renesto-Audiffren P."/>
            <person name="Fournier P.-E."/>
            <person name="Barbe V."/>
            <person name="Samson D."/>
            <person name="Roux V."/>
            <person name="Cossart P."/>
            <person name="Weissenbach J."/>
            <person name="Claverie J.-M."/>
            <person name="Raoult D."/>
        </authorList>
    </citation>
    <scope>NUCLEOTIDE SEQUENCE [LARGE SCALE GENOMIC DNA]</scope>
    <source>
        <strain>ATCC VR-613 / Malish 7</strain>
    </source>
</reference>
<organism>
    <name type="scientific">Rickettsia conorii (strain ATCC VR-613 / Malish 7)</name>
    <dbReference type="NCBI Taxonomy" id="272944"/>
    <lineage>
        <taxon>Bacteria</taxon>
        <taxon>Pseudomonadati</taxon>
        <taxon>Pseudomonadota</taxon>
        <taxon>Alphaproteobacteria</taxon>
        <taxon>Rickettsiales</taxon>
        <taxon>Rickettsiaceae</taxon>
        <taxon>Rickettsieae</taxon>
        <taxon>Rickettsia</taxon>
        <taxon>spotted fever group</taxon>
    </lineage>
</organism>
<keyword id="KW-0004">4Fe-4S</keyword>
<keyword id="KW-0997">Cell inner membrane</keyword>
<keyword id="KW-1003">Cell membrane</keyword>
<keyword id="KW-0408">Iron</keyword>
<keyword id="KW-0411">Iron-sulfur</keyword>
<keyword id="KW-0472">Membrane</keyword>
<keyword id="KW-0479">Metal-binding</keyword>
<keyword id="KW-0520">NAD</keyword>
<keyword id="KW-0874">Quinone</keyword>
<keyword id="KW-1278">Translocase</keyword>
<keyword id="KW-0813">Transport</keyword>
<keyword id="KW-0830">Ubiquinone</keyword>
<protein>
    <recommendedName>
        <fullName evidence="2">NADH-quinone oxidoreductase subunit B</fullName>
        <ecNumber evidence="2">7.1.1.-</ecNumber>
    </recommendedName>
    <alternativeName>
        <fullName evidence="2">NADH dehydrogenase I subunit B</fullName>
    </alternativeName>
    <alternativeName>
        <fullName evidence="2">NDH-1 subunit B</fullName>
    </alternativeName>
</protein>